<gene>
    <name evidence="1" type="primary">glnS</name>
    <name type="ordered locus">IL1478</name>
</gene>
<evidence type="ECO:0000255" key="1">
    <source>
        <dbReference type="HAMAP-Rule" id="MF_00126"/>
    </source>
</evidence>
<sequence length="561" mass="64529">MADTDSRPSNFIRQIIDKDLASGKHATVHTRFPPEPNGYLHIGHAKSIVLNFGIAEDYNGTCNLRFDDTNPLKEKVDYVNSIKKDVEWLGYHWEGEPRYSSNYFDQLHGFAVELIEKGLAYVDFSSQDKMREMRGTLKEPGVNSPYRDTSVEENLKHFADMTAGKHEEGTAALRAKIDMSSPFMCMRDPVIYRVRFVHHHQTGDKWCVYPMYDFTHCISDALEGITHSLCTLEFQDNRRLYDWVLDNISIDCHPQQIEFSRLNLQYTVMSKRIINTLVDENKVSGWDDPRIASIAGLRRRGYTPDSVREFCRRIGVTKMDNQVEMSMLEACIRDDLNVNAPRAMAVMDPVKIVIENYPEGEQELLDAPNHPNDPEMGSRQVTFSREIWIEREDFRESANKKFKRLVLDKEVRLRNAYVIRADRIETDDNGEIQTIYCHYDADTLGKDPADGRKVKGVIHWVSAETAKAAEFRVYDRLFQVPNPAAEEDLFSTLNPESLVIKKGFVEANLASAKLGENFQFERLGYYCLDQDAETEGRLIFNQTVGLRDSWAKIEQEQTTGS</sequence>
<keyword id="KW-0030">Aminoacyl-tRNA synthetase</keyword>
<keyword id="KW-0067">ATP-binding</keyword>
<keyword id="KW-0963">Cytoplasm</keyword>
<keyword id="KW-0436">Ligase</keyword>
<keyword id="KW-0547">Nucleotide-binding</keyword>
<keyword id="KW-0648">Protein biosynthesis</keyword>
<keyword id="KW-1185">Reference proteome</keyword>
<reference key="1">
    <citation type="journal article" date="2004" name="Proc. Natl. Acad. Sci. U.S.A.">
        <title>Genome sequence of the deep-sea gamma-proteobacterium Idiomarina loihiensis reveals amino acid fermentation as a source of carbon and energy.</title>
        <authorList>
            <person name="Hou S."/>
            <person name="Saw J.H."/>
            <person name="Lee K.S."/>
            <person name="Freitas T.A."/>
            <person name="Belisle C."/>
            <person name="Kawarabayasi Y."/>
            <person name="Donachie S.P."/>
            <person name="Pikina A."/>
            <person name="Galperin M.Y."/>
            <person name="Koonin E.V."/>
            <person name="Makarova K.S."/>
            <person name="Omelchenko M.V."/>
            <person name="Sorokin A."/>
            <person name="Wolf Y.I."/>
            <person name="Li Q.X."/>
            <person name="Keum Y.S."/>
            <person name="Campbell S."/>
            <person name="Denery J."/>
            <person name="Aizawa S."/>
            <person name="Shibata S."/>
            <person name="Malahoff A."/>
            <person name="Alam M."/>
        </authorList>
    </citation>
    <scope>NUCLEOTIDE SEQUENCE [LARGE SCALE GENOMIC DNA]</scope>
    <source>
        <strain>ATCC BAA-735 / DSM 15497 / L2-TR</strain>
    </source>
</reference>
<organism>
    <name type="scientific">Idiomarina loihiensis (strain ATCC BAA-735 / DSM 15497 / L2-TR)</name>
    <dbReference type="NCBI Taxonomy" id="283942"/>
    <lineage>
        <taxon>Bacteria</taxon>
        <taxon>Pseudomonadati</taxon>
        <taxon>Pseudomonadota</taxon>
        <taxon>Gammaproteobacteria</taxon>
        <taxon>Alteromonadales</taxon>
        <taxon>Idiomarinaceae</taxon>
        <taxon>Idiomarina</taxon>
    </lineage>
</organism>
<protein>
    <recommendedName>
        <fullName evidence="1">Glutamine--tRNA ligase</fullName>
        <ecNumber evidence="1">6.1.1.18</ecNumber>
    </recommendedName>
    <alternativeName>
        <fullName evidence="1">Glutaminyl-tRNA synthetase</fullName>
        <shortName evidence="1">GlnRS</shortName>
    </alternativeName>
</protein>
<feature type="chain" id="PRO_1000095492" description="Glutamine--tRNA ligase">
    <location>
        <begin position="1"/>
        <end position="561"/>
    </location>
</feature>
<feature type="short sequence motif" description="'HIGH' region" evidence="1">
    <location>
        <begin position="34"/>
        <end position="44"/>
    </location>
</feature>
<feature type="short sequence motif" description="'KMSKS' region" evidence="1">
    <location>
        <begin position="268"/>
        <end position="272"/>
    </location>
</feature>
<feature type="binding site" evidence="1">
    <location>
        <begin position="35"/>
        <end position="37"/>
    </location>
    <ligand>
        <name>ATP</name>
        <dbReference type="ChEBI" id="CHEBI:30616"/>
    </ligand>
</feature>
<feature type="binding site" evidence="1">
    <location>
        <begin position="41"/>
        <end position="47"/>
    </location>
    <ligand>
        <name>ATP</name>
        <dbReference type="ChEBI" id="CHEBI:30616"/>
    </ligand>
</feature>
<feature type="binding site" evidence="1">
    <location>
        <position position="67"/>
    </location>
    <ligand>
        <name>L-glutamine</name>
        <dbReference type="ChEBI" id="CHEBI:58359"/>
    </ligand>
</feature>
<feature type="binding site" evidence="1">
    <location>
        <position position="212"/>
    </location>
    <ligand>
        <name>L-glutamine</name>
        <dbReference type="ChEBI" id="CHEBI:58359"/>
    </ligand>
</feature>
<feature type="binding site" evidence="1">
    <location>
        <position position="231"/>
    </location>
    <ligand>
        <name>ATP</name>
        <dbReference type="ChEBI" id="CHEBI:30616"/>
    </ligand>
</feature>
<feature type="binding site" evidence="1">
    <location>
        <begin position="261"/>
        <end position="262"/>
    </location>
    <ligand>
        <name>ATP</name>
        <dbReference type="ChEBI" id="CHEBI:30616"/>
    </ligand>
</feature>
<feature type="binding site" evidence="1">
    <location>
        <begin position="269"/>
        <end position="271"/>
    </location>
    <ligand>
        <name>ATP</name>
        <dbReference type="ChEBI" id="CHEBI:30616"/>
    </ligand>
</feature>
<dbReference type="EC" id="6.1.1.18" evidence="1"/>
<dbReference type="EMBL" id="AE017340">
    <property type="protein sequence ID" value="AAV82318.1"/>
    <property type="molecule type" value="Genomic_DNA"/>
</dbReference>
<dbReference type="RefSeq" id="WP_011234724.1">
    <property type="nucleotide sequence ID" value="NC_006512.1"/>
</dbReference>
<dbReference type="SMR" id="Q5QXQ2"/>
<dbReference type="STRING" id="283942.IL1478"/>
<dbReference type="GeneID" id="41336655"/>
<dbReference type="KEGG" id="ilo:IL1478"/>
<dbReference type="eggNOG" id="COG0008">
    <property type="taxonomic scope" value="Bacteria"/>
</dbReference>
<dbReference type="HOGENOM" id="CLU_001882_2_3_6"/>
<dbReference type="OrthoDB" id="9801560at2"/>
<dbReference type="Proteomes" id="UP000001171">
    <property type="component" value="Chromosome"/>
</dbReference>
<dbReference type="GO" id="GO:0005829">
    <property type="term" value="C:cytosol"/>
    <property type="evidence" value="ECO:0007669"/>
    <property type="project" value="TreeGrafter"/>
</dbReference>
<dbReference type="GO" id="GO:0005524">
    <property type="term" value="F:ATP binding"/>
    <property type="evidence" value="ECO:0007669"/>
    <property type="project" value="UniProtKB-UniRule"/>
</dbReference>
<dbReference type="GO" id="GO:0004819">
    <property type="term" value="F:glutamine-tRNA ligase activity"/>
    <property type="evidence" value="ECO:0007669"/>
    <property type="project" value="UniProtKB-UniRule"/>
</dbReference>
<dbReference type="GO" id="GO:0006425">
    <property type="term" value="P:glutaminyl-tRNA aminoacylation"/>
    <property type="evidence" value="ECO:0007669"/>
    <property type="project" value="InterPro"/>
</dbReference>
<dbReference type="GO" id="GO:0006424">
    <property type="term" value="P:glutamyl-tRNA aminoacylation"/>
    <property type="evidence" value="ECO:0007669"/>
    <property type="project" value="UniProtKB-UniRule"/>
</dbReference>
<dbReference type="CDD" id="cd00807">
    <property type="entry name" value="GlnRS_core"/>
    <property type="match status" value="1"/>
</dbReference>
<dbReference type="FunFam" id="1.10.1160.10:FF:000001">
    <property type="entry name" value="Glutamine--tRNA ligase"/>
    <property type="match status" value="1"/>
</dbReference>
<dbReference type="FunFam" id="2.40.240.10:FF:000001">
    <property type="entry name" value="Glutamine--tRNA ligase"/>
    <property type="match status" value="1"/>
</dbReference>
<dbReference type="FunFam" id="3.90.800.10:FF:000001">
    <property type="entry name" value="Glutamine--tRNA ligase"/>
    <property type="match status" value="1"/>
</dbReference>
<dbReference type="FunFam" id="3.40.50.620:FF:000037">
    <property type="entry name" value="Glutamine--tRNA ligase cytoplasmic"/>
    <property type="match status" value="1"/>
</dbReference>
<dbReference type="Gene3D" id="3.40.50.620">
    <property type="entry name" value="HUPs"/>
    <property type="match status" value="1"/>
</dbReference>
<dbReference type="Gene3D" id="2.40.240.10">
    <property type="entry name" value="Ribosomal Protein L25, Chain P"/>
    <property type="match status" value="2"/>
</dbReference>
<dbReference type="HAMAP" id="MF_00126">
    <property type="entry name" value="Gln_tRNA_synth"/>
    <property type="match status" value="1"/>
</dbReference>
<dbReference type="InterPro" id="IPR001412">
    <property type="entry name" value="aa-tRNA-synth_I_CS"/>
</dbReference>
<dbReference type="InterPro" id="IPR004514">
    <property type="entry name" value="Gln-tRNA-synth"/>
</dbReference>
<dbReference type="InterPro" id="IPR050132">
    <property type="entry name" value="Gln/Glu-tRNA_Ligase"/>
</dbReference>
<dbReference type="InterPro" id="IPR022861">
    <property type="entry name" value="Gln_tRNA_ligase_bac"/>
</dbReference>
<dbReference type="InterPro" id="IPR000924">
    <property type="entry name" value="Glu/Gln-tRNA-synth"/>
</dbReference>
<dbReference type="InterPro" id="IPR020058">
    <property type="entry name" value="Glu/Gln-tRNA-synth_Ib_cat-dom"/>
</dbReference>
<dbReference type="InterPro" id="IPR020059">
    <property type="entry name" value="Glu/Gln-tRNA-synth_Ib_codon-bd"/>
</dbReference>
<dbReference type="InterPro" id="IPR020056">
    <property type="entry name" value="Rbsml_bL25/Gln-tRNA_synth_N"/>
</dbReference>
<dbReference type="InterPro" id="IPR011035">
    <property type="entry name" value="Ribosomal_bL25/Gln-tRNA_synth"/>
</dbReference>
<dbReference type="InterPro" id="IPR014729">
    <property type="entry name" value="Rossmann-like_a/b/a_fold"/>
</dbReference>
<dbReference type="InterPro" id="IPR049437">
    <property type="entry name" value="tRNA-synt_1c_C2"/>
</dbReference>
<dbReference type="NCBIfam" id="TIGR00440">
    <property type="entry name" value="glnS"/>
    <property type="match status" value="1"/>
</dbReference>
<dbReference type="NCBIfam" id="NF011291">
    <property type="entry name" value="PRK14703.1"/>
    <property type="match status" value="1"/>
</dbReference>
<dbReference type="PANTHER" id="PTHR43097:SF5">
    <property type="entry name" value="GLUTAMATE--TRNA LIGASE"/>
    <property type="match status" value="1"/>
</dbReference>
<dbReference type="PANTHER" id="PTHR43097">
    <property type="entry name" value="GLUTAMINE-TRNA LIGASE"/>
    <property type="match status" value="1"/>
</dbReference>
<dbReference type="Pfam" id="PF00749">
    <property type="entry name" value="tRNA-synt_1c"/>
    <property type="match status" value="1"/>
</dbReference>
<dbReference type="Pfam" id="PF03950">
    <property type="entry name" value="tRNA-synt_1c_C"/>
    <property type="match status" value="1"/>
</dbReference>
<dbReference type="Pfam" id="PF20974">
    <property type="entry name" value="tRNA-synt_1c_C2"/>
    <property type="match status" value="1"/>
</dbReference>
<dbReference type="PRINTS" id="PR00987">
    <property type="entry name" value="TRNASYNTHGLU"/>
</dbReference>
<dbReference type="SUPFAM" id="SSF52374">
    <property type="entry name" value="Nucleotidylyl transferase"/>
    <property type="match status" value="1"/>
</dbReference>
<dbReference type="SUPFAM" id="SSF50715">
    <property type="entry name" value="Ribosomal protein L25-like"/>
    <property type="match status" value="1"/>
</dbReference>
<dbReference type="PROSITE" id="PS00178">
    <property type="entry name" value="AA_TRNA_LIGASE_I"/>
    <property type="match status" value="1"/>
</dbReference>
<name>SYQ_IDILO</name>
<comment type="catalytic activity">
    <reaction evidence="1">
        <text>tRNA(Gln) + L-glutamine + ATP = L-glutaminyl-tRNA(Gln) + AMP + diphosphate</text>
        <dbReference type="Rhea" id="RHEA:20121"/>
        <dbReference type="Rhea" id="RHEA-COMP:9662"/>
        <dbReference type="Rhea" id="RHEA-COMP:9681"/>
        <dbReference type="ChEBI" id="CHEBI:30616"/>
        <dbReference type="ChEBI" id="CHEBI:33019"/>
        <dbReference type="ChEBI" id="CHEBI:58359"/>
        <dbReference type="ChEBI" id="CHEBI:78442"/>
        <dbReference type="ChEBI" id="CHEBI:78521"/>
        <dbReference type="ChEBI" id="CHEBI:456215"/>
        <dbReference type="EC" id="6.1.1.18"/>
    </reaction>
</comment>
<comment type="subunit">
    <text evidence="1">Monomer.</text>
</comment>
<comment type="subcellular location">
    <subcellularLocation>
        <location evidence="1">Cytoplasm</location>
    </subcellularLocation>
</comment>
<comment type="similarity">
    <text evidence="1">Belongs to the class-I aminoacyl-tRNA synthetase family.</text>
</comment>
<accession>Q5QXQ2</accession>
<proteinExistence type="inferred from homology"/>